<keyword id="KW-0378">Hydrolase</keyword>
<keyword id="KW-0408">Iron</keyword>
<keyword id="KW-0479">Metal-binding</keyword>
<keyword id="KW-0648">Protein biosynthesis</keyword>
<keyword id="KW-1185">Reference proteome</keyword>
<comment type="function">
    <text evidence="1">Removes the formyl group from the N-terminal Met of newly synthesized proteins. Requires at least a dipeptide for an efficient rate of reaction. N-terminal L-methionine is a prerequisite for activity but the enzyme has broad specificity at other positions.</text>
</comment>
<comment type="catalytic activity">
    <reaction evidence="1">
        <text>N-terminal N-formyl-L-methionyl-[peptide] + H2O = N-terminal L-methionyl-[peptide] + formate</text>
        <dbReference type="Rhea" id="RHEA:24420"/>
        <dbReference type="Rhea" id="RHEA-COMP:10639"/>
        <dbReference type="Rhea" id="RHEA-COMP:10640"/>
        <dbReference type="ChEBI" id="CHEBI:15377"/>
        <dbReference type="ChEBI" id="CHEBI:15740"/>
        <dbReference type="ChEBI" id="CHEBI:49298"/>
        <dbReference type="ChEBI" id="CHEBI:64731"/>
        <dbReference type="EC" id="3.5.1.88"/>
    </reaction>
</comment>
<comment type="cofactor">
    <cofactor evidence="1">
        <name>Fe(2+)</name>
        <dbReference type="ChEBI" id="CHEBI:29033"/>
    </cofactor>
    <text evidence="1">Binds 1 Fe(2+) ion.</text>
</comment>
<comment type="similarity">
    <text evidence="1">Belongs to the polypeptide deformylase family.</text>
</comment>
<proteinExistence type="inferred from homology"/>
<evidence type="ECO:0000255" key="1">
    <source>
        <dbReference type="HAMAP-Rule" id="MF_00163"/>
    </source>
</evidence>
<organism>
    <name type="scientific">Stenotrophomonas maltophilia (strain K279a)</name>
    <dbReference type="NCBI Taxonomy" id="522373"/>
    <lineage>
        <taxon>Bacteria</taxon>
        <taxon>Pseudomonadati</taxon>
        <taxon>Pseudomonadota</taxon>
        <taxon>Gammaproteobacteria</taxon>
        <taxon>Lysobacterales</taxon>
        <taxon>Lysobacteraceae</taxon>
        <taxon>Stenotrophomonas</taxon>
        <taxon>Stenotrophomonas maltophilia group</taxon>
    </lineage>
</organism>
<gene>
    <name evidence="1" type="primary">def</name>
    <name type="ordered locus">Smlt4178</name>
</gene>
<name>DEF_STRMK</name>
<protein>
    <recommendedName>
        <fullName evidence="1">Peptide deformylase</fullName>
        <shortName evidence="1">PDF</shortName>
        <ecNumber evidence="1">3.5.1.88</ecNumber>
    </recommendedName>
    <alternativeName>
        <fullName evidence="1">Polypeptide deformylase</fullName>
    </alternativeName>
</protein>
<accession>B2FIR4</accession>
<feature type="chain" id="PRO_1000097347" description="Peptide deformylase">
    <location>
        <begin position="1"/>
        <end position="170"/>
    </location>
</feature>
<feature type="active site" evidence="1">
    <location>
        <position position="137"/>
    </location>
</feature>
<feature type="binding site" evidence="1">
    <location>
        <position position="94"/>
    </location>
    <ligand>
        <name>Fe cation</name>
        <dbReference type="ChEBI" id="CHEBI:24875"/>
    </ligand>
</feature>
<feature type="binding site" evidence="1">
    <location>
        <position position="136"/>
    </location>
    <ligand>
        <name>Fe cation</name>
        <dbReference type="ChEBI" id="CHEBI:24875"/>
    </ligand>
</feature>
<feature type="binding site" evidence="1">
    <location>
        <position position="140"/>
    </location>
    <ligand>
        <name>Fe cation</name>
        <dbReference type="ChEBI" id="CHEBI:24875"/>
    </ligand>
</feature>
<sequence length="170" mass="19122">MALLPILEFPDPRLRTKAALIEAAEVTTPAFQELIDNMFLTMYDAPGIGLAATQVDVHKRFMVIDVSEEKNEPHVFINPEIVAKDGGRVYQEGCLSVPGIFADVTRADTITVKYLDRNGQEQQMEAGDVLATCIQHEMDHLDGKLFIDYLSPLKREMVRKKLAKQRKHVA</sequence>
<reference key="1">
    <citation type="journal article" date="2008" name="Genome Biol.">
        <title>The complete genome, comparative and functional analysis of Stenotrophomonas maltophilia reveals an organism heavily shielded by drug resistance determinants.</title>
        <authorList>
            <person name="Crossman L.C."/>
            <person name="Gould V.C."/>
            <person name="Dow J.M."/>
            <person name="Vernikos G.S."/>
            <person name="Okazaki A."/>
            <person name="Sebaihia M."/>
            <person name="Saunders D."/>
            <person name="Arrowsmith C."/>
            <person name="Carver T."/>
            <person name="Peters N."/>
            <person name="Adlem E."/>
            <person name="Kerhornou A."/>
            <person name="Lord A."/>
            <person name="Murphy L."/>
            <person name="Seeger K."/>
            <person name="Squares R."/>
            <person name="Rutter S."/>
            <person name="Quail M.A."/>
            <person name="Rajandream M.A."/>
            <person name="Harris D."/>
            <person name="Churcher C."/>
            <person name="Bentley S.D."/>
            <person name="Parkhill J."/>
            <person name="Thomson N.R."/>
            <person name="Avison M.B."/>
        </authorList>
    </citation>
    <scope>NUCLEOTIDE SEQUENCE [LARGE SCALE GENOMIC DNA]</scope>
    <source>
        <strain>K279a</strain>
    </source>
</reference>
<dbReference type="EC" id="3.5.1.88" evidence="1"/>
<dbReference type="EMBL" id="AM743169">
    <property type="protein sequence ID" value="CAQ47569.1"/>
    <property type="molecule type" value="Genomic_DNA"/>
</dbReference>
<dbReference type="RefSeq" id="WP_005411192.1">
    <property type="nucleotide sequence ID" value="NC_010943.1"/>
</dbReference>
<dbReference type="SMR" id="B2FIR4"/>
<dbReference type="EnsemblBacteria" id="CAQ47569">
    <property type="protein sequence ID" value="CAQ47569"/>
    <property type="gene ID" value="Smlt4178"/>
</dbReference>
<dbReference type="GeneID" id="93835139"/>
<dbReference type="KEGG" id="sml:Smlt4178"/>
<dbReference type="eggNOG" id="COG0242">
    <property type="taxonomic scope" value="Bacteria"/>
</dbReference>
<dbReference type="HOGENOM" id="CLU_061901_2_1_6"/>
<dbReference type="Proteomes" id="UP000008840">
    <property type="component" value="Chromosome"/>
</dbReference>
<dbReference type="GO" id="GO:0046872">
    <property type="term" value="F:metal ion binding"/>
    <property type="evidence" value="ECO:0007669"/>
    <property type="project" value="UniProtKB-KW"/>
</dbReference>
<dbReference type="GO" id="GO:0042586">
    <property type="term" value="F:peptide deformylase activity"/>
    <property type="evidence" value="ECO:0007669"/>
    <property type="project" value="UniProtKB-UniRule"/>
</dbReference>
<dbReference type="GO" id="GO:0043686">
    <property type="term" value="P:co-translational protein modification"/>
    <property type="evidence" value="ECO:0007669"/>
    <property type="project" value="TreeGrafter"/>
</dbReference>
<dbReference type="GO" id="GO:0006412">
    <property type="term" value="P:translation"/>
    <property type="evidence" value="ECO:0007669"/>
    <property type="project" value="UniProtKB-UniRule"/>
</dbReference>
<dbReference type="CDD" id="cd00487">
    <property type="entry name" value="Pep_deformylase"/>
    <property type="match status" value="1"/>
</dbReference>
<dbReference type="FunFam" id="3.90.45.10:FF:000001">
    <property type="entry name" value="Peptide deformylase"/>
    <property type="match status" value="1"/>
</dbReference>
<dbReference type="Gene3D" id="3.90.45.10">
    <property type="entry name" value="Peptide deformylase"/>
    <property type="match status" value="1"/>
</dbReference>
<dbReference type="HAMAP" id="MF_00163">
    <property type="entry name" value="Pep_deformylase"/>
    <property type="match status" value="1"/>
</dbReference>
<dbReference type="InterPro" id="IPR023635">
    <property type="entry name" value="Peptide_deformylase"/>
</dbReference>
<dbReference type="InterPro" id="IPR036821">
    <property type="entry name" value="Peptide_deformylase_sf"/>
</dbReference>
<dbReference type="NCBIfam" id="TIGR00079">
    <property type="entry name" value="pept_deformyl"/>
    <property type="match status" value="1"/>
</dbReference>
<dbReference type="NCBIfam" id="NF001159">
    <property type="entry name" value="PRK00150.1-3"/>
    <property type="match status" value="1"/>
</dbReference>
<dbReference type="PANTHER" id="PTHR10458">
    <property type="entry name" value="PEPTIDE DEFORMYLASE"/>
    <property type="match status" value="1"/>
</dbReference>
<dbReference type="PANTHER" id="PTHR10458:SF21">
    <property type="entry name" value="PEPTIDE DEFORMYLASE"/>
    <property type="match status" value="1"/>
</dbReference>
<dbReference type="Pfam" id="PF01327">
    <property type="entry name" value="Pep_deformylase"/>
    <property type="match status" value="1"/>
</dbReference>
<dbReference type="PIRSF" id="PIRSF004749">
    <property type="entry name" value="Pep_def"/>
    <property type="match status" value="1"/>
</dbReference>
<dbReference type="PRINTS" id="PR01576">
    <property type="entry name" value="PDEFORMYLASE"/>
</dbReference>
<dbReference type="SUPFAM" id="SSF56420">
    <property type="entry name" value="Peptide deformylase"/>
    <property type="match status" value="1"/>
</dbReference>